<protein>
    <recommendedName>
        <fullName evidence="1">Large ribosomal subunit protein bL34</fullName>
    </recommendedName>
    <alternativeName>
        <fullName evidence="2">50S ribosomal protein L34</fullName>
    </alternativeName>
</protein>
<name>RL34_CUPNH</name>
<organism>
    <name type="scientific">Cupriavidus necator (strain ATCC 17699 / DSM 428 / KCTC 22496 / NCIMB 10442 / H16 / Stanier 337)</name>
    <name type="common">Ralstonia eutropha</name>
    <dbReference type="NCBI Taxonomy" id="381666"/>
    <lineage>
        <taxon>Bacteria</taxon>
        <taxon>Pseudomonadati</taxon>
        <taxon>Pseudomonadota</taxon>
        <taxon>Betaproteobacteria</taxon>
        <taxon>Burkholderiales</taxon>
        <taxon>Burkholderiaceae</taxon>
        <taxon>Cupriavidus</taxon>
    </lineage>
</organism>
<gene>
    <name evidence="1" type="primary">rpmH</name>
    <name type="ordered locus">H16_A3747</name>
</gene>
<evidence type="ECO:0000255" key="1">
    <source>
        <dbReference type="HAMAP-Rule" id="MF_00391"/>
    </source>
</evidence>
<evidence type="ECO:0000305" key="2"/>
<proteinExistence type="inferred from homology"/>
<feature type="chain" id="PRO_1000013417" description="Large ribosomal subunit protein bL34">
    <location>
        <begin position="1"/>
        <end position="44"/>
    </location>
</feature>
<comment type="similarity">
    <text evidence="1">Belongs to the bacterial ribosomal protein bL34 family.</text>
</comment>
<reference key="1">
    <citation type="journal article" date="2006" name="Nat. Biotechnol.">
        <title>Genome sequence of the bioplastic-producing 'Knallgas' bacterium Ralstonia eutropha H16.</title>
        <authorList>
            <person name="Pohlmann A."/>
            <person name="Fricke W.F."/>
            <person name="Reinecke F."/>
            <person name="Kusian B."/>
            <person name="Liesegang H."/>
            <person name="Cramm R."/>
            <person name="Eitinger T."/>
            <person name="Ewering C."/>
            <person name="Poetter M."/>
            <person name="Schwartz E."/>
            <person name="Strittmatter A."/>
            <person name="Voss I."/>
            <person name="Gottschalk G."/>
            <person name="Steinbuechel A."/>
            <person name="Friedrich B."/>
            <person name="Bowien B."/>
        </authorList>
    </citation>
    <scope>NUCLEOTIDE SEQUENCE [LARGE SCALE GENOMIC DNA]</scope>
    <source>
        <strain>ATCC 17699 / DSM 428 / KCTC 22496 / NCIMB 10442 / H16 / Stanier 337</strain>
    </source>
</reference>
<accession>Q0K5B8</accession>
<sequence>MKRTYQPSVTRRKRTHGFRVRMKTRGGRAVINARRAKGRKRLAI</sequence>
<keyword id="KW-1185">Reference proteome</keyword>
<keyword id="KW-0687">Ribonucleoprotein</keyword>
<keyword id="KW-0689">Ribosomal protein</keyword>
<dbReference type="EMBL" id="AM260479">
    <property type="protein sequence ID" value="CAJ94803.1"/>
    <property type="molecule type" value="Genomic_DNA"/>
</dbReference>
<dbReference type="RefSeq" id="WP_008650850.1">
    <property type="nucleotide sequence ID" value="NZ_CP039287.1"/>
</dbReference>
<dbReference type="SMR" id="Q0K5B8"/>
<dbReference type="STRING" id="381666.H16_A3747"/>
<dbReference type="GeneID" id="98343429"/>
<dbReference type="KEGG" id="reh:H16_A3747"/>
<dbReference type="eggNOG" id="COG0230">
    <property type="taxonomic scope" value="Bacteria"/>
</dbReference>
<dbReference type="HOGENOM" id="CLU_129938_2_0_4"/>
<dbReference type="OrthoDB" id="9804164at2"/>
<dbReference type="Proteomes" id="UP000008210">
    <property type="component" value="Chromosome 1"/>
</dbReference>
<dbReference type="GO" id="GO:1990904">
    <property type="term" value="C:ribonucleoprotein complex"/>
    <property type="evidence" value="ECO:0007669"/>
    <property type="project" value="UniProtKB-KW"/>
</dbReference>
<dbReference type="GO" id="GO:0005840">
    <property type="term" value="C:ribosome"/>
    <property type="evidence" value="ECO:0007669"/>
    <property type="project" value="UniProtKB-KW"/>
</dbReference>
<dbReference type="GO" id="GO:0003735">
    <property type="term" value="F:structural constituent of ribosome"/>
    <property type="evidence" value="ECO:0007669"/>
    <property type="project" value="InterPro"/>
</dbReference>
<dbReference type="GO" id="GO:0006412">
    <property type="term" value="P:translation"/>
    <property type="evidence" value="ECO:0007669"/>
    <property type="project" value="UniProtKB-UniRule"/>
</dbReference>
<dbReference type="FunFam" id="1.10.287.3980:FF:000001">
    <property type="entry name" value="Mitochondrial ribosomal protein L34"/>
    <property type="match status" value="1"/>
</dbReference>
<dbReference type="Gene3D" id="1.10.287.3980">
    <property type="match status" value="1"/>
</dbReference>
<dbReference type="HAMAP" id="MF_00391">
    <property type="entry name" value="Ribosomal_bL34"/>
    <property type="match status" value="1"/>
</dbReference>
<dbReference type="InterPro" id="IPR000271">
    <property type="entry name" value="Ribosomal_bL34"/>
</dbReference>
<dbReference type="InterPro" id="IPR020939">
    <property type="entry name" value="Ribosomal_bL34_CS"/>
</dbReference>
<dbReference type="NCBIfam" id="TIGR01030">
    <property type="entry name" value="rpmH_bact"/>
    <property type="match status" value="1"/>
</dbReference>
<dbReference type="PANTHER" id="PTHR14503:SF4">
    <property type="entry name" value="LARGE RIBOSOMAL SUBUNIT PROTEIN BL34M"/>
    <property type="match status" value="1"/>
</dbReference>
<dbReference type="PANTHER" id="PTHR14503">
    <property type="entry name" value="MITOCHONDRIAL RIBOSOMAL PROTEIN 34 FAMILY MEMBER"/>
    <property type="match status" value="1"/>
</dbReference>
<dbReference type="Pfam" id="PF00468">
    <property type="entry name" value="Ribosomal_L34"/>
    <property type="match status" value="1"/>
</dbReference>
<dbReference type="PROSITE" id="PS00784">
    <property type="entry name" value="RIBOSOMAL_L34"/>
    <property type="match status" value="1"/>
</dbReference>